<gene>
    <name type="ordered locus">BQ2027_MB1617</name>
</gene>
<reference key="1">
    <citation type="submission" date="1998-01" db="EMBL/GenBank/DDBJ databases">
        <title>Cloning, sequencing, and identification of Mycobacterium bovis BCG biotin biosynthetic genes by complementing two Mycobacterium smegmatis biotin mutants.</title>
        <authorList>
            <person name="Yu S."/>
            <person name="Jacobs W.R. Jr."/>
        </authorList>
    </citation>
    <scope>NUCLEOTIDE SEQUENCE [GENOMIC DNA]</scope>
    <source>
        <strain>BCG / Pasteur</strain>
    </source>
</reference>
<reference key="2">
    <citation type="journal article" date="2003" name="Proc. Natl. Acad. Sci. U.S.A.">
        <title>The complete genome sequence of Mycobacterium bovis.</title>
        <authorList>
            <person name="Garnier T."/>
            <person name="Eiglmeier K."/>
            <person name="Camus J.-C."/>
            <person name="Medina N."/>
            <person name="Mansoor H."/>
            <person name="Pryor M."/>
            <person name="Duthoy S."/>
            <person name="Grondin S."/>
            <person name="Lacroix C."/>
            <person name="Monsempe C."/>
            <person name="Simon S."/>
            <person name="Harris B."/>
            <person name="Atkin R."/>
            <person name="Doggett J."/>
            <person name="Mayes R."/>
            <person name="Keating L."/>
            <person name="Wheeler P.R."/>
            <person name="Parkhill J."/>
            <person name="Barrell B.G."/>
            <person name="Cole S.T."/>
            <person name="Gordon S.V."/>
            <person name="Hewinson R.G."/>
        </authorList>
    </citation>
    <scope>NUCLEOTIDE SEQUENCE [LARGE SCALE GENOMIC DNA]</scope>
    <source>
        <strain>ATCC BAA-935 / AF2122/97</strain>
    </source>
</reference>
<reference key="3">
    <citation type="journal article" date="2017" name="Genome Announc.">
        <title>Updated reference genome sequence and annotation of Mycobacterium bovis AF2122/97.</title>
        <authorList>
            <person name="Malone K.M."/>
            <person name="Farrell D."/>
            <person name="Stuber T.P."/>
            <person name="Schubert O.T."/>
            <person name="Aebersold R."/>
            <person name="Robbe-Austerman S."/>
            <person name="Gordon S.V."/>
        </authorList>
    </citation>
    <scope>NUCLEOTIDE SEQUENCE [LARGE SCALE GENOMIC DNA]</scope>
    <scope>GENOME REANNOTATION</scope>
    <source>
        <strain>ATCC BAA-935 / AF2122/97</strain>
    </source>
</reference>
<sequence>MLGLSATGVLVGGLWAWIAPPIHAVVAITRAGERVHEYLGSESQNFFIAPFMLLGLLSVLAVVASALMWQWREHRGPQMVAGLSIGLTTAAAIAAGVGALVVRLRYGALDFDTVPLSRGDHALTYVTQAPPVFFARRPLQIALTLMWPAGIASLVYALLAAGTARDDLGGYPAVDPSSNARTEALETPQAPVS</sequence>
<accession>P0A5F4</accession>
<accession>A0A1R3XYQ7</accession>
<accession>O06599</accession>
<accession>O52590</accession>
<accession>X2BID8</accession>
<name>Y1617_MYCBO</name>
<comment type="subcellular location">
    <subcellularLocation>
        <location evidence="2">Cell membrane</location>
        <topology evidence="2">Multi-pass membrane protein</topology>
    </subcellularLocation>
</comment>
<comment type="similarity">
    <text evidence="2">To M.leprae ML1222.</text>
</comment>
<comment type="sequence caution" evidence="2">
    <conflict type="erroneous initiation">
        <sequence resource="EMBL-CDS" id="SIU00221"/>
    </conflict>
    <text>Extended N-terminus.</text>
</comment>
<keyword id="KW-1003">Cell membrane</keyword>
<keyword id="KW-0472">Membrane</keyword>
<keyword id="KW-1185">Reference proteome</keyword>
<keyword id="KW-0812">Transmembrane</keyword>
<keyword id="KW-1133">Transmembrane helix</keyword>
<dbReference type="EMBL" id="AF041819">
    <property type="protein sequence ID" value="AAB96963.1"/>
    <property type="molecule type" value="Genomic_DNA"/>
</dbReference>
<dbReference type="EMBL" id="LT708304">
    <property type="protein sequence ID" value="SIU00221.1"/>
    <property type="status" value="ALT_INIT"/>
    <property type="molecule type" value="Genomic_DNA"/>
</dbReference>
<dbReference type="RefSeq" id="NP_855270.1">
    <property type="nucleotide sequence ID" value="NC_002945.3"/>
</dbReference>
<dbReference type="KEGG" id="mbo:BQ2027_MB1617"/>
<dbReference type="PATRIC" id="fig|233413.5.peg.1766"/>
<dbReference type="Proteomes" id="UP000001419">
    <property type="component" value="Chromosome"/>
</dbReference>
<dbReference type="GO" id="GO:0005886">
    <property type="term" value="C:plasma membrane"/>
    <property type="evidence" value="ECO:0007669"/>
    <property type="project" value="UniProtKB-SubCell"/>
</dbReference>
<dbReference type="InterPro" id="IPR021213">
    <property type="entry name" value="DUF2567"/>
</dbReference>
<dbReference type="Pfam" id="PF10821">
    <property type="entry name" value="DUF2567"/>
    <property type="match status" value="1"/>
</dbReference>
<feature type="chain" id="PRO_0000103892" description="Uncharacterized protein Mb1617">
    <location>
        <begin position="1"/>
        <end position="193"/>
    </location>
</feature>
<feature type="transmembrane region" description="Helical" evidence="1">
    <location>
        <begin position="8"/>
        <end position="28"/>
    </location>
</feature>
<feature type="transmembrane region" description="Helical" evidence="1">
    <location>
        <begin position="46"/>
        <end position="66"/>
    </location>
</feature>
<feature type="transmembrane region" description="Helical" evidence="1">
    <location>
        <begin position="82"/>
        <end position="102"/>
    </location>
</feature>
<feature type="transmembrane region" description="Helical" evidence="1">
    <location>
        <begin position="141"/>
        <end position="161"/>
    </location>
</feature>
<evidence type="ECO:0000255" key="1"/>
<evidence type="ECO:0000305" key="2"/>
<organism>
    <name type="scientific">Mycobacterium bovis (strain ATCC BAA-935 / AF2122/97)</name>
    <dbReference type="NCBI Taxonomy" id="233413"/>
    <lineage>
        <taxon>Bacteria</taxon>
        <taxon>Bacillati</taxon>
        <taxon>Actinomycetota</taxon>
        <taxon>Actinomycetes</taxon>
        <taxon>Mycobacteriales</taxon>
        <taxon>Mycobacteriaceae</taxon>
        <taxon>Mycobacterium</taxon>
        <taxon>Mycobacterium tuberculosis complex</taxon>
    </lineage>
</organism>
<proteinExistence type="predicted"/>
<protein>
    <recommendedName>
        <fullName>Uncharacterized protein Mb1617</fullName>
    </recommendedName>
</protein>